<organism>
    <name type="scientific">Homo sapiens</name>
    <name type="common">Human</name>
    <dbReference type="NCBI Taxonomy" id="9606"/>
    <lineage>
        <taxon>Eukaryota</taxon>
        <taxon>Metazoa</taxon>
        <taxon>Chordata</taxon>
        <taxon>Craniata</taxon>
        <taxon>Vertebrata</taxon>
        <taxon>Euteleostomi</taxon>
        <taxon>Mammalia</taxon>
        <taxon>Eutheria</taxon>
        <taxon>Euarchontoglires</taxon>
        <taxon>Primates</taxon>
        <taxon>Haplorrhini</taxon>
        <taxon>Catarrhini</taxon>
        <taxon>Hominidae</taxon>
        <taxon>Homo</taxon>
    </lineage>
</organism>
<dbReference type="EMBL" id="X72964">
    <property type="protein sequence ID" value="CAA51467.1"/>
    <property type="molecule type" value="mRNA"/>
</dbReference>
<dbReference type="EMBL" id="U82671">
    <property type="status" value="NOT_ANNOTATED_CDS"/>
    <property type="molecule type" value="Genomic_DNA"/>
</dbReference>
<dbReference type="EMBL" id="AK311940">
    <property type="protein sequence ID" value="BAG34881.1"/>
    <property type="molecule type" value="mRNA"/>
</dbReference>
<dbReference type="EMBL" id="BT007256">
    <property type="protein sequence ID" value="AAP35920.1"/>
    <property type="molecule type" value="mRNA"/>
</dbReference>
<dbReference type="EMBL" id="AY919675">
    <property type="protein sequence ID" value="AAW82436.1"/>
    <property type="molecule type" value="Genomic_DNA"/>
</dbReference>
<dbReference type="EMBL" id="CH471172">
    <property type="protein sequence ID" value="EAW72900.1"/>
    <property type="molecule type" value="Genomic_DNA"/>
</dbReference>
<dbReference type="EMBL" id="BC005334">
    <property type="protein sequence ID" value="AAH05334.1"/>
    <property type="molecule type" value="mRNA"/>
</dbReference>
<dbReference type="EMBL" id="BC013873">
    <property type="protein sequence ID" value="AAH13873.1"/>
    <property type="molecule type" value="mRNA"/>
</dbReference>
<dbReference type="CCDS" id="CCDS14716.1"/>
<dbReference type="PIR" id="A49652">
    <property type="entry name" value="A49652"/>
</dbReference>
<dbReference type="RefSeq" id="NP_004335.1">
    <property type="nucleotide sequence ID" value="NM_004344.3"/>
</dbReference>
<dbReference type="PDB" id="1M39">
    <property type="method" value="NMR"/>
    <property type="chains" value="A=84-172"/>
</dbReference>
<dbReference type="PDB" id="1ZMZ">
    <property type="method" value="NMR"/>
    <property type="chains" value="A=1-98"/>
</dbReference>
<dbReference type="PDB" id="2A4J">
    <property type="method" value="NMR"/>
    <property type="chains" value="A=94-172"/>
</dbReference>
<dbReference type="PDB" id="2GGM">
    <property type="method" value="X-ray"/>
    <property type="resolution" value="2.35 A"/>
    <property type="chains" value="A/B=1-172"/>
</dbReference>
<dbReference type="PDB" id="2K2I">
    <property type="method" value="NMR"/>
    <property type="chains" value="A=94-172"/>
</dbReference>
<dbReference type="PDB" id="2OBH">
    <property type="method" value="X-ray"/>
    <property type="resolution" value="1.80 A"/>
    <property type="chains" value="A/B=26-168"/>
</dbReference>
<dbReference type="PDB" id="8EBS">
    <property type="method" value="EM"/>
    <property type="resolution" value="4.00 A"/>
    <property type="chains" value="J=1-172"/>
</dbReference>
<dbReference type="PDB" id="8EBT">
    <property type="method" value="EM"/>
    <property type="resolution" value="3.90 A"/>
    <property type="chains" value="J=103-172"/>
</dbReference>
<dbReference type="PDB" id="8EBV">
    <property type="method" value="EM"/>
    <property type="resolution" value="7.10 A"/>
    <property type="chains" value="J=1-172"/>
</dbReference>
<dbReference type="PDB" id="8EBW">
    <property type="method" value="EM"/>
    <property type="resolution" value="5.60 A"/>
    <property type="chains" value="J=1-172"/>
</dbReference>
<dbReference type="PDB" id="8EBX">
    <property type="method" value="EM"/>
    <property type="resolution" value="3.60 A"/>
    <property type="chains" value="J=1-172"/>
</dbReference>
<dbReference type="PDB" id="8J07">
    <property type="method" value="EM"/>
    <property type="resolution" value="4.10 A"/>
    <property type="chains" value="f2=1-172"/>
</dbReference>
<dbReference type="PDBsum" id="1M39"/>
<dbReference type="PDBsum" id="1ZMZ"/>
<dbReference type="PDBsum" id="2A4J"/>
<dbReference type="PDBsum" id="2GGM"/>
<dbReference type="PDBsum" id="2K2I"/>
<dbReference type="PDBsum" id="2OBH"/>
<dbReference type="PDBsum" id="8EBS"/>
<dbReference type="PDBsum" id="8EBT"/>
<dbReference type="PDBsum" id="8EBV"/>
<dbReference type="PDBsum" id="8EBW"/>
<dbReference type="PDBsum" id="8EBX"/>
<dbReference type="PDBsum" id="8J07"/>
<dbReference type="EMDB" id="EMD-27996"/>
<dbReference type="EMDB" id="EMD-27997"/>
<dbReference type="EMDB" id="EMD-27999"/>
<dbReference type="EMDB" id="EMD-28000"/>
<dbReference type="EMDB" id="EMD-28001"/>
<dbReference type="EMDB" id="EMD-29674"/>
<dbReference type="EMDB" id="EMD-35888"/>
<dbReference type="EMDB" id="EMD-6495"/>
<dbReference type="EMDB" id="EMD-6497"/>
<dbReference type="EMDB" id="EMD-6498"/>
<dbReference type="SMR" id="P41208"/>
<dbReference type="BioGRID" id="107496">
    <property type="interactions" value="141"/>
</dbReference>
<dbReference type="ComplexPortal" id="CPX-2477">
    <property type="entry name" value="TREX-2 transcription-export complex, CETN2 variant"/>
</dbReference>
<dbReference type="ComplexPortal" id="CPX-2669">
    <property type="entry name" value="XPC complex, RAD23B variant"/>
</dbReference>
<dbReference type="ComplexPortal" id="CPX-2672">
    <property type="entry name" value="XPC complex, RAD23A variant"/>
</dbReference>
<dbReference type="CORUM" id="P41208"/>
<dbReference type="FunCoup" id="P41208">
    <property type="interactions" value="1568"/>
</dbReference>
<dbReference type="IntAct" id="P41208">
    <property type="interactions" value="95"/>
</dbReference>
<dbReference type="MINT" id="P41208"/>
<dbReference type="STRING" id="9606.ENSP00000359300"/>
<dbReference type="GlyGen" id="P41208">
    <property type="glycosylation" value="1 site, 1 O-linked glycan (1 site)"/>
</dbReference>
<dbReference type="iPTMnet" id="P41208"/>
<dbReference type="MetOSite" id="P41208"/>
<dbReference type="PhosphoSitePlus" id="P41208"/>
<dbReference type="BioMuta" id="CETN2"/>
<dbReference type="DMDM" id="729052"/>
<dbReference type="jPOST" id="P41208"/>
<dbReference type="MassIVE" id="P41208"/>
<dbReference type="PaxDb" id="9606-ENSP00000359300"/>
<dbReference type="PeptideAtlas" id="P41208"/>
<dbReference type="ProteomicsDB" id="55415"/>
<dbReference type="Pumba" id="P41208"/>
<dbReference type="TopDownProteomics" id="P41208"/>
<dbReference type="Antibodypedia" id="30770">
    <property type="antibodies" value="194 antibodies from 29 providers"/>
</dbReference>
<dbReference type="DNASU" id="1069"/>
<dbReference type="Ensembl" id="ENST00000370277.5">
    <property type="protein sequence ID" value="ENSP00000359300.3"/>
    <property type="gene ID" value="ENSG00000147400.10"/>
</dbReference>
<dbReference type="Ensembl" id="ENST00000709996.1">
    <property type="protein sequence ID" value="ENSP00000517979.1"/>
    <property type="gene ID" value="ENSG00000292191.1"/>
</dbReference>
<dbReference type="GeneID" id="1069"/>
<dbReference type="KEGG" id="hsa:1069"/>
<dbReference type="MANE-Select" id="ENST00000370277.5">
    <property type="protein sequence ID" value="ENSP00000359300.3"/>
    <property type="RefSeq nucleotide sequence ID" value="NM_004344.3"/>
    <property type="RefSeq protein sequence ID" value="NP_004335.1"/>
</dbReference>
<dbReference type="UCSC" id="uc004fgq.4">
    <property type="organism name" value="human"/>
</dbReference>
<dbReference type="AGR" id="HGNC:1867"/>
<dbReference type="CTD" id="1069"/>
<dbReference type="DisGeNET" id="1069"/>
<dbReference type="GeneCards" id="CETN2"/>
<dbReference type="HGNC" id="HGNC:1867">
    <property type="gene designation" value="CETN2"/>
</dbReference>
<dbReference type="HPA" id="ENSG00000147400">
    <property type="expression patterns" value="Tissue enhanced (choroid plexus, fallopian tube)"/>
</dbReference>
<dbReference type="MIM" id="300006">
    <property type="type" value="gene"/>
</dbReference>
<dbReference type="neXtProt" id="NX_P41208"/>
<dbReference type="OpenTargets" id="ENSG00000147400"/>
<dbReference type="PharmGKB" id="PA26420"/>
<dbReference type="VEuPathDB" id="HostDB:ENSG00000147400"/>
<dbReference type="eggNOG" id="KOG0028">
    <property type="taxonomic scope" value="Eukaryota"/>
</dbReference>
<dbReference type="GeneTree" id="ENSGT00940000155935"/>
<dbReference type="HOGENOM" id="CLU_061288_18_2_1"/>
<dbReference type="InParanoid" id="P41208"/>
<dbReference type="OMA" id="HPGLTQQ"/>
<dbReference type="OrthoDB" id="343296at2759"/>
<dbReference type="PAN-GO" id="P41208">
    <property type="GO annotations" value="6 GO annotations based on evolutionary models"/>
</dbReference>
<dbReference type="PhylomeDB" id="P41208"/>
<dbReference type="TreeFam" id="TF101141"/>
<dbReference type="PathwayCommons" id="P41208"/>
<dbReference type="Reactome" id="R-HSA-2565942">
    <property type="pathway name" value="Regulation of PLK1 Activity at G2/M Transition"/>
</dbReference>
<dbReference type="Reactome" id="R-HSA-3108214">
    <property type="pathway name" value="SUMOylation of DNA damage response and repair proteins"/>
</dbReference>
<dbReference type="Reactome" id="R-HSA-380259">
    <property type="pathway name" value="Loss of Nlp from mitotic centrosomes"/>
</dbReference>
<dbReference type="Reactome" id="R-HSA-380270">
    <property type="pathway name" value="Recruitment of mitotic centrosome proteins and complexes"/>
</dbReference>
<dbReference type="Reactome" id="R-HSA-380284">
    <property type="pathway name" value="Loss of proteins required for interphase microtubule organization from the centrosome"/>
</dbReference>
<dbReference type="Reactome" id="R-HSA-380320">
    <property type="pathway name" value="Recruitment of NuMA to mitotic centrosomes"/>
</dbReference>
<dbReference type="Reactome" id="R-HSA-5620912">
    <property type="pathway name" value="Anchoring of the basal body to the plasma membrane"/>
</dbReference>
<dbReference type="Reactome" id="R-HSA-5696394">
    <property type="pathway name" value="DNA Damage Recognition in GG-NER"/>
</dbReference>
<dbReference type="Reactome" id="R-HSA-5696395">
    <property type="pathway name" value="Formation of Incision Complex in GG-NER"/>
</dbReference>
<dbReference type="Reactome" id="R-HSA-8854518">
    <property type="pathway name" value="AURKA Activation by TPX2"/>
</dbReference>
<dbReference type="SignaLink" id="P41208"/>
<dbReference type="SIGNOR" id="P41208"/>
<dbReference type="BioGRID-ORCS" id="1069">
    <property type="hits" value="16 hits in 778 CRISPR screens"/>
</dbReference>
<dbReference type="CD-CODE" id="8C2F96ED">
    <property type="entry name" value="Centrosome"/>
</dbReference>
<dbReference type="ChiTaRS" id="CETN2">
    <property type="organism name" value="human"/>
</dbReference>
<dbReference type="EvolutionaryTrace" id="P41208"/>
<dbReference type="GeneWiki" id="CETN2"/>
<dbReference type="GenomeRNAi" id="1069"/>
<dbReference type="Pharos" id="P41208">
    <property type="development level" value="Tbio"/>
</dbReference>
<dbReference type="PRO" id="PR:P41208"/>
<dbReference type="Proteomes" id="UP000005640">
    <property type="component" value="Chromosome X"/>
</dbReference>
<dbReference type="RNAct" id="P41208">
    <property type="molecule type" value="protein"/>
</dbReference>
<dbReference type="Bgee" id="ENSG00000147400">
    <property type="expression patterns" value="Expressed in bronchial epithelial cell and 209 other cell types or tissues"/>
</dbReference>
<dbReference type="GO" id="GO:0097729">
    <property type="term" value="C:9+2 motile cilium"/>
    <property type="evidence" value="ECO:0007669"/>
    <property type="project" value="Ensembl"/>
</dbReference>
<dbReference type="GO" id="GO:0045177">
    <property type="term" value="C:apical part of cell"/>
    <property type="evidence" value="ECO:0007669"/>
    <property type="project" value="Ensembl"/>
</dbReference>
<dbReference type="GO" id="GO:0005814">
    <property type="term" value="C:centriole"/>
    <property type="evidence" value="ECO:0000314"/>
    <property type="project" value="UniProtKB"/>
</dbReference>
<dbReference type="GO" id="GO:0005813">
    <property type="term" value="C:centrosome"/>
    <property type="evidence" value="ECO:0000314"/>
    <property type="project" value="UniProtKB"/>
</dbReference>
<dbReference type="GO" id="GO:0036064">
    <property type="term" value="C:ciliary basal body"/>
    <property type="evidence" value="ECO:0007669"/>
    <property type="project" value="Ensembl"/>
</dbReference>
<dbReference type="GO" id="GO:0005829">
    <property type="term" value="C:cytosol"/>
    <property type="evidence" value="ECO:0000304"/>
    <property type="project" value="Reactome"/>
</dbReference>
<dbReference type="GO" id="GO:0097386">
    <property type="term" value="C:glial cell projection"/>
    <property type="evidence" value="ECO:0007669"/>
    <property type="project" value="Ensembl"/>
</dbReference>
<dbReference type="GO" id="GO:0044615">
    <property type="term" value="C:nuclear pore nuclear basket"/>
    <property type="evidence" value="ECO:0000314"/>
    <property type="project" value="UniProtKB"/>
</dbReference>
<dbReference type="GO" id="GO:0005654">
    <property type="term" value="C:nucleoplasm"/>
    <property type="evidence" value="ECO:0000304"/>
    <property type="project" value="Reactome"/>
</dbReference>
<dbReference type="GO" id="GO:0005634">
    <property type="term" value="C:nucleus"/>
    <property type="evidence" value="ECO:0000318"/>
    <property type="project" value="GO_Central"/>
</dbReference>
<dbReference type="GO" id="GO:0032391">
    <property type="term" value="C:photoreceptor connecting cilium"/>
    <property type="evidence" value="ECO:0007669"/>
    <property type="project" value="Ensembl"/>
</dbReference>
<dbReference type="GO" id="GO:0070390">
    <property type="term" value="C:transcription export complex 2"/>
    <property type="evidence" value="ECO:0000314"/>
    <property type="project" value="UniProtKB"/>
</dbReference>
<dbReference type="GO" id="GO:0071942">
    <property type="term" value="C:XPC complex"/>
    <property type="evidence" value="ECO:0000314"/>
    <property type="project" value="UniProtKB"/>
</dbReference>
<dbReference type="GO" id="GO:0005509">
    <property type="term" value="F:calcium ion binding"/>
    <property type="evidence" value="ECO:0000318"/>
    <property type="project" value="GO_Central"/>
</dbReference>
<dbReference type="GO" id="GO:0031683">
    <property type="term" value="F:G-protein beta/gamma-subunit complex binding"/>
    <property type="evidence" value="ECO:0007669"/>
    <property type="project" value="Ensembl"/>
</dbReference>
<dbReference type="GO" id="GO:0032795">
    <property type="term" value="F:heterotrimeric G-protein binding"/>
    <property type="evidence" value="ECO:0007669"/>
    <property type="project" value="Ensembl"/>
</dbReference>
<dbReference type="GO" id="GO:0008017">
    <property type="term" value="F:microtubule binding"/>
    <property type="evidence" value="ECO:0007669"/>
    <property type="project" value="Ensembl"/>
</dbReference>
<dbReference type="GO" id="GO:0051301">
    <property type="term" value="P:cell division"/>
    <property type="evidence" value="ECO:0007669"/>
    <property type="project" value="UniProtKB-KW"/>
</dbReference>
<dbReference type="GO" id="GO:0007099">
    <property type="term" value="P:centriole replication"/>
    <property type="evidence" value="ECO:0000315"/>
    <property type="project" value="UniProtKB"/>
</dbReference>
<dbReference type="GO" id="GO:0000226">
    <property type="term" value="P:microtubule cytoskeleton organization"/>
    <property type="evidence" value="ECO:0000318"/>
    <property type="project" value="GO_Central"/>
</dbReference>
<dbReference type="GO" id="GO:0000278">
    <property type="term" value="P:mitotic cell cycle"/>
    <property type="evidence" value="ECO:0000303"/>
    <property type="project" value="UniProtKB"/>
</dbReference>
<dbReference type="GO" id="GO:0051028">
    <property type="term" value="P:mRNA transport"/>
    <property type="evidence" value="ECO:0007669"/>
    <property type="project" value="UniProtKB-KW"/>
</dbReference>
<dbReference type="GO" id="GO:0006289">
    <property type="term" value="P:nucleotide-excision repair"/>
    <property type="evidence" value="ECO:0000314"/>
    <property type="project" value="UniProtKB"/>
</dbReference>
<dbReference type="GO" id="GO:0015031">
    <property type="term" value="P:protein transport"/>
    <property type="evidence" value="ECO:0007669"/>
    <property type="project" value="UniProtKB-KW"/>
</dbReference>
<dbReference type="GO" id="GO:0032465">
    <property type="term" value="P:regulation of cytokinesis"/>
    <property type="evidence" value="ECO:0000315"/>
    <property type="project" value="UniProtKB"/>
</dbReference>
<dbReference type="GO" id="GO:0007283">
    <property type="term" value="P:spermatogenesis"/>
    <property type="evidence" value="ECO:0007669"/>
    <property type="project" value="Ensembl"/>
</dbReference>
<dbReference type="CDD" id="cd00051">
    <property type="entry name" value="EFh"/>
    <property type="match status" value="2"/>
</dbReference>
<dbReference type="DisProt" id="DP01259"/>
<dbReference type="FunFam" id="1.10.238.10:FF:000077">
    <property type="entry name" value="Centrin 1"/>
    <property type="match status" value="1"/>
</dbReference>
<dbReference type="FunFam" id="1.10.238.10:FF:000070">
    <property type="entry name" value="Centrin-1"/>
    <property type="match status" value="1"/>
</dbReference>
<dbReference type="Gene3D" id="1.10.238.10">
    <property type="entry name" value="EF-hand"/>
    <property type="match status" value="3"/>
</dbReference>
<dbReference type="IDEAL" id="IID00551"/>
<dbReference type="InterPro" id="IPR050145">
    <property type="entry name" value="Centrin_CML-like"/>
</dbReference>
<dbReference type="InterPro" id="IPR011992">
    <property type="entry name" value="EF-hand-dom_pair"/>
</dbReference>
<dbReference type="InterPro" id="IPR018247">
    <property type="entry name" value="EF_Hand_1_Ca_BS"/>
</dbReference>
<dbReference type="InterPro" id="IPR002048">
    <property type="entry name" value="EF_hand_dom"/>
</dbReference>
<dbReference type="InterPro" id="IPR000629">
    <property type="entry name" value="RNA-helicase_DEAD-box_CS"/>
</dbReference>
<dbReference type="PANTHER" id="PTHR23050">
    <property type="entry name" value="CALCIUM BINDING PROTEIN"/>
    <property type="match status" value="1"/>
</dbReference>
<dbReference type="Pfam" id="PF13499">
    <property type="entry name" value="EF-hand_7"/>
    <property type="match status" value="2"/>
</dbReference>
<dbReference type="SMART" id="SM00054">
    <property type="entry name" value="EFh"/>
    <property type="match status" value="4"/>
</dbReference>
<dbReference type="SUPFAM" id="SSF47473">
    <property type="entry name" value="EF-hand"/>
    <property type="match status" value="1"/>
</dbReference>
<dbReference type="PROSITE" id="PS00018">
    <property type="entry name" value="EF_HAND_1"/>
    <property type="match status" value="2"/>
</dbReference>
<dbReference type="PROSITE" id="PS50222">
    <property type="entry name" value="EF_HAND_2"/>
    <property type="match status" value="4"/>
</dbReference>
<gene>
    <name type="primary">CETN2</name>
    <name type="synonym">CALT</name>
    <name type="synonym">CEN2</name>
</gene>
<name>CETN2_HUMAN</name>
<sequence>MASNFKKANMASSSQRKRMSPKPELTEEQKQEIREAFDLFDADGTGTIDVKELKVAMRALGFEPKKEEIKKMISEIDKEGTGKMNFGDFLTVMTQKMSEKDTKEEILKAFKLFDDDETGKISFKNLKRVAKELGENLTDEELQEMIDEADRDGDGEVSEQEFLRIMKKTSLY</sequence>
<comment type="function">
    <text>Plays a fundamental role in microtubule organizing center structure and function. Required for centriole duplication and correct spindle formation. Has a role in regulating cytokinesis and genome stability via cooperation with CALM1 and CCP110.</text>
</comment>
<comment type="function">
    <text>Involved in global genome nucleotide excision repair (GG-NER) by acting as component of the XPC complex. Cooperatively with RAD23B appears to stabilize XPC. In vitro, stimulates DNA binding of the XPC:RAD23B dimer.</text>
</comment>
<comment type="function">
    <text>The XPC complex is proposed to represent the first factor bound at the sites of DNA damage and together with other core recognition factors, XPA, RPA and the TFIIH complex, is part of the pre-incision (or initial recognition) complex. The XPC complex recognizes a wide spectrum of damaged DNA characterized by distortions of the DNA helix such as single-stranded loops, mismatched bubbles or single-stranded overhangs. The orientation of XPC complex binding appears to be crucial for inducing a productive NER. XPC complex is proposed to recognize and to interact with unpaired bases on the undamaged DNA strand which is followed by recruitment of the TFIIH complex and subsequent scanning for lesions in the opposite strand in a 5'-to-3' direction by the NER machinery. Cyclobutane pyrimidine dimers (CPDs) which are formed upon UV-induced DNA damage esacpe detection by the XPC complex due to a low degree of structural perurbation. Instead they are detected by the UV-DDB complex which in turn recruits and cooperates with the XPC complex in the respective DNA repair.</text>
</comment>
<comment type="function">
    <text evidence="11 18">As a component of the TREX-2 complex, involved in the export of mRNAs to the cytoplasm through the nuclear pores.</text>
</comment>
<comment type="subunit">
    <text evidence="3 5 6 7 8 9 10 11 12 13 15 16">Monomer. Homooligomer (PubMed:15356003). Interacts with SFI1 (PubMed:16956364). Interacts with CCP110 (PubMed:16760425). Component of the XPC complex composed of XPC, RAD23B and CETN2 (PubMed:11279143, PubMed:15964821, PubMed:16533048, PubMed:16627479). Component of the nuclear pore complex (NPC)-associated TREX-2 complex (transcription and export complex 2), composed of at least GANP, 2 copies of ENY2, PCID2, SEM1/DSS1, and either centrin CETN2 or centrin CETN3. The TREX-2 complex also associates with ALYREF/ALY and with the nucleoporin NUP153 (PubMed:22307388, PubMed:23591820). Interacts with USP49 (PubMed:36702832). Forms a microtubule-associated complex with POC5, POC1B and FAM161A (PubMed:32110738). Interacts with CCDC15 (PubMed:37934472).</text>
</comment>
<comment type="interaction">
    <interactant intactId="EBI-1789926">
        <id>P41208</id>
    </interactant>
    <interactant intactId="EBI-1566217">
        <id>O43303</id>
        <label>CCP110</label>
    </interactant>
    <organismsDiffer>false</organismsDiffer>
    <experiments>5</experiments>
</comment>
<comment type="interaction">
    <interactant intactId="EBI-1789926">
        <id>P41208</id>
    </interactant>
    <interactant intactId="EBI-466029">
        <id>P42858</id>
        <label>HTT</label>
    </interactant>
    <organismsDiffer>false</organismsDiffer>
    <experiments>13</experiments>
</comment>
<comment type="interaction">
    <interactant intactId="EBI-1789926">
        <id>P41208</id>
    </interactant>
    <interactant intactId="EBI-2511350">
        <id>Q16513</id>
        <label>PKN2</label>
    </interactant>
    <organismsDiffer>false</organismsDiffer>
    <experiments>3</experiments>
</comment>
<comment type="interaction">
    <interactant intactId="EBI-1789926">
        <id>P41208</id>
    </interactant>
    <interactant intactId="EBI-10171633">
        <id>Q96PV4</id>
        <label>PNMA5</label>
    </interactant>
    <organismsDiffer>false</organismsDiffer>
    <experiments>3</experiments>
</comment>
<comment type="interaction">
    <interactant intactId="EBI-1789926">
        <id>P41208</id>
    </interactant>
    <interactant intactId="EBI-2561090">
        <id>Q8NA72</id>
        <label>POC5</label>
    </interactant>
    <organismsDiffer>false</organismsDiffer>
    <experiments>14</experiments>
</comment>
<comment type="interaction">
    <interactant intactId="EBI-1789926">
        <id>P41208</id>
    </interactant>
    <interactant intactId="EBI-11751537">
        <id>Q8NA72-3</id>
        <label>POC5</label>
    </interactant>
    <organismsDiffer>false</organismsDiffer>
    <experiments>4</experiments>
</comment>
<comment type="interaction">
    <interactant intactId="EBI-1789926">
        <id>P41208</id>
    </interactant>
    <interactant intactId="EBI-743371">
        <id>A8K8P3</id>
        <label>SFI1</label>
    </interactant>
    <organismsDiffer>false</organismsDiffer>
    <experiments>5</experiments>
</comment>
<comment type="interaction">
    <interactant intactId="EBI-1789926">
        <id>P41208</id>
    </interactant>
    <interactant intactId="EBI-10182463">
        <id>Q2NKQ1-4</id>
        <label>SGSM1</label>
    </interactant>
    <organismsDiffer>false</organismsDiffer>
    <experiments>6</experiments>
</comment>
<comment type="interaction">
    <interactant intactId="EBI-1789926">
        <id>P41208</id>
    </interactant>
    <interactant intactId="EBI-2512823">
        <id>Q9H0E7</id>
        <label>USP44</label>
    </interactant>
    <organismsDiffer>false</organismsDiffer>
    <experiments>3</experiments>
</comment>
<comment type="interaction">
    <interactant intactId="EBI-1789926">
        <id>P41208</id>
    </interactant>
    <interactant intactId="EBI-372610">
        <id>Q01831</id>
        <label>XPC</label>
    </interactant>
    <organismsDiffer>false</organismsDiffer>
    <experiments>14</experiments>
</comment>
<comment type="subcellular location">
    <subcellularLocation>
        <location evidence="4 16">Cytoplasm</location>
        <location evidence="4 16">Cytoskeleton</location>
        <location evidence="4 16">Microtubule organizing center</location>
        <location evidence="4 16">Centrosome</location>
    </subcellularLocation>
    <subcellularLocation>
        <location evidence="12 13 14 16">Cytoplasm</location>
        <location evidence="12 13 14 16">Cytoskeleton</location>
        <location evidence="12 13 14 16">Microtubule organizing center</location>
        <location evidence="12 13 14 16">Centrosome</location>
        <location evidence="12 13 14 16">Centriole</location>
    </subcellularLocation>
    <subcellularLocation>
        <location evidence="12">Nucleus envelope</location>
    </subcellularLocation>
    <subcellularLocation>
        <location evidence="12">Nucleus</location>
        <location evidence="12">Nuclear pore complex</location>
    </subcellularLocation>
    <subcellularLocation>
        <location evidence="17">Nucleus</location>
    </subcellularLocation>
    <text evidence="16">Localizes to the inner scaffold in the central region of centrioles and to the distal end of centrioles.</text>
</comment>
<comment type="miscellaneous">
    <text>Binds two moles of calcium per mole of protein.</text>
</comment>
<comment type="similarity">
    <text evidence="17">Belongs to the centrin family.</text>
</comment>
<protein>
    <recommendedName>
        <fullName>Centrin-2</fullName>
    </recommendedName>
    <alternativeName>
        <fullName>Caltractin isoform 1</fullName>
    </alternativeName>
</protein>
<evidence type="ECO:0000255" key="1">
    <source>
        <dbReference type="PROSITE-ProRule" id="PRU00448"/>
    </source>
</evidence>
<evidence type="ECO:0000256" key="2">
    <source>
        <dbReference type="SAM" id="MobiDB-lite"/>
    </source>
</evidence>
<evidence type="ECO:0000269" key="3">
    <source>
    </source>
</evidence>
<evidence type="ECO:0000269" key="4">
    <source>
    </source>
</evidence>
<evidence type="ECO:0000269" key="5">
    <source>
    </source>
</evidence>
<evidence type="ECO:0000269" key="6">
    <source>
    </source>
</evidence>
<evidence type="ECO:0000269" key="7">
    <source>
    </source>
</evidence>
<evidence type="ECO:0000269" key="8">
    <source>
    </source>
</evidence>
<evidence type="ECO:0000269" key="9">
    <source>
    </source>
</evidence>
<evidence type="ECO:0000269" key="10">
    <source>
    </source>
</evidence>
<evidence type="ECO:0000269" key="11">
    <source>
    </source>
</evidence>
<evidence type="ECO:0000269" key="12">
    <source>
    </source>
</evidence>
<evidence type="ECO:0000269" key="13">
    <source>
    </source>
</evidence>
<evidence type="ECO:0000269" key="14">
    <source>
    </source>
</evidence>
<evidence type="ECO:0000269" key="15">
    <source>
    </source>
</evidence>
<evidence type="ECO:0000269" key="16">
    <source>
    </source>
</evidence>
<evidence type="ECO:0000305" key="17"/>
<evidence type="ECO:0000305" key="18">
    <source>
    </source>
</evidence>
<evidence type="ECO:0007744" key="19">
    <source>
    </source>
</evidence>
<evidence type="ECO:0007744" key="20">
    <source>
    </source>
</evidence>
<evidence type="ECO:0007744" key="21">
    <source>
    </source>
</evidence>
<evidence type="ECO:0007744" key="22">
    <source>
    </source>
</evidence>
<evidence type="ECO:0007744" key="23">
    <source>
    </source>
</evidence>
<evidence type="ECO:0007744" key="24">
    <source>
    </source>
</evidence>
<evidence type="ECO:0007744" key="25">
    <source>
    </source>
</evidence>
<evidence type="ECO:0007829" key="26">
    <source>
        <dbReference type="PDB" id="1ZMZ"/>
    </source>
</evidence>
<evidence type="ECO:0007829" key="27">
    <source>
        <dbReference type="PDB" id="2A4J"/>
    </source>
</evidence>
<evidence type="ECO:0007829" key="28">
    <source>
        <dbReference type="PDB" id="2OBH"/>
    </source>
</evidence>
<keyword id="KW-0002">3D-structure</keyword>
<keyword id="KW-0007">Acetylation</keyword>
<keyword id="KW-0106">Calcium</keyword>
<keyword id="KW-0131">Cell cycle</keyword>
<keyword id="KW-0132">Cell division</keyword>
<keyword id="KW-0963">Cytoplasm</keyword>
<keyword id="KW-0206">Cytoskeleton</keyword>
<keyword id="KW-0227">DNA damage</keyword>
<keyword id="KW-0234">DNA repair</keyword>
<keyword id="KW-1017">Isopeptide bond</keyword>
<keyword id="KW-0479">Metal-binding</keyword>
<keyword id="KW-0498">Mitosis</keyword>
<keyword id="KW-0509">mRNA transport</keyword>
<keyword id="KW-0906">Nuclear pore complex</keyword>
<keyword id="KW-0539">Nucleus</keyword>
<keyword id="KW-0597">Phosphoprotein</keyword>
<keyword id="KW-0653">Protein transport</keyword>
<keyword id="KW-1267">Proteomics identification</keyword>
<keyword id="KW-1185">Reference proteome</keyword>
<keyword id="KW-0677">Repeat</keyword>
<keyword id="KW-0811">Translocation</keyword>
<keyword id="KW-0813">Transport</keyword>
<keyword id="KW-0832">Ubl conjugation</keyword>
<feature type="initiator methionine" description="Removed" evidence="23">
    <location>
        <position position="1"/>
    </location>
</feature>
<feature type="chain" id="PRO_0000073561" description="Centrin-2">
    <location>
        <begin position="2"/>
        <end position="172"/>
    </location>
</feature>
<feature type="domain" description="EF-hand 1" evidence="1">
    <location>
        <begin position="28"/>
        <end position="63"/>
    </location>
</feature>
<feature type="domain" description="EF-hand 2" evidence="1">
    <location>
        <begin position="64"/>
        <end position="99"/>
    </location>
</feature>
<feature type="domain" description="EF-hand 3" evidence="1">
    <location>
        <begin position="101"/>
        <end position="136"/>
    </location>
</feature>
<feature type="domain" description="EF-hand 4" evidence="1">
    <location>
        <begin position="137"/>
        <end position="172"/>
    </location>
</feature>
<feature type="region of interest" description="Disordered" evidence="2">
    <location>
        <begin position="1"/>
        <end position="30"/>
    </location>
</feature>
<feature type="region of interest" description="Required for self-assembly">
    <location>
        <begin position="2"/>
        <end position="25"/>
    </location>
</feature>
<feature type="binding site" evidence="1">
    <location>
        <position position="41"/>
    </location>
    <ligand>
        <name>Ca(2+)</name>
        <dbReference type="ChEBI" id="CHEBI:29108"/>
        <label>1</label>
    </ligand>
</feature>
<feature type="binding site" evidence="1">
    <location>
        <position position="43"/>
    </location>
    <ligand>
        <name>Ca(2+)</name>
        <dbReference type="ChEBI" id="CHEBI:29108"/>
        <label>1</label>
    </ligand>
</feature>
<feature type="binding site" evidence="1">
    <location>
        <position position="45"/>
    </location>
    <ligand>
        <name>Ca(2+)</name>
        <dbReference type="ChEBI" id="CHEBI:29108"/>
        <label>1</label>
    </ligand>
</feature>
<feature type="binding site" evidence="1">
    <location>
        <position position="47"/>
    </location>
    <ligand>
        <name>Ca(2+)</name>
        <dbReference type="ChEBI" id="CHEBI:29108"/>
        <label>1</label>
    </ligand>
</feature>
<feature type="binding site" evidence="1">
    <location>
        <position position="52"/>
    </location>
    <ligand>
        <name>Ca(2+)</name>
        <dbReference type="ChEBI" id="CHEBI:29108"/>
        <label>1</label>
    </ligand>
</feature>
<feature type="binding site" evidence="1">
    <location>
        <position position="150"/>
    </location>
    <ligand>
        <name>Ca(2+)</name>
        <dbReference type="ChEBI" id="CHEBI:29108"/>
        <label>2</label>
    </ligand>
</feature>
<feature type="binding site" evidence="1">
    <location>
        <position position="152"/>
    </location>
    <ligand>
        <name>Ca(2+)</name>
        <dbReference type="ChEBI" id="CHEBI:29108"/>
        <label>2</label>
    </ligand>
</feature>
<feature type="binding site" evidence="1">
    <location>
        <position position="154"/>
    </location>
    <ligand>
        <name>Ca(2+)</name>
        <dbReference type="ChEBI" id="CHEBI:29108"/>
        <label>2</label>
    </ligand>
</feature>
<feature type="binding site" evidence="1">
    <location>
        <position position="156"/>
    </location>
    <ligand>
        <name>Ca(2+)</name>
        <dbReference type="ChEBI" id="CHEBI:29108"/>
        <label>2</label>
    </ligand>
</feature>
<feature type="binding site" evidence="1">
    <location>
        <position position="161"/>
    </location>
    <ligand>
        <name>Ca(2+)</name>
        <dbReference type="ChEBI" id="CHEBI:29108"/>
        <label>2</label>
    </ligand>
</feature>
<feature type="modified residue" description="N-acetylalanine" evidence="23">
    <location>
        <position position="2"/>
    </location>
</feature>
<feature type="modified residue" description="Phosphoserine" evidence="20 21 22 24">
    <location>
        <position position="20"/>
    </location>
</feature>
<feature type="modified residue" description="Phosphothreonine" evidence="19 21 22">
    <location>
        <position position="26"/>
    </location>
</feature>
<feature type="cross-link" description="Glycyl lysine isopeptide (Lys-Gly) (interchain with G-Cter in SUMO2)" evidence="25">
    <location>
        <position position="22"/>
    </location>
</feature>
<feature type="strand" evidence="26">
    <location>
        <begin position="22"/>
        <end position="24"/>
    </location>
</feature>
<feature type="helix" evidence="28">
    <location>
        <begin position="27"/>
        <end position="38"/>
    </location>
</feature>
<feature type="strand" evidence="28">
    <location>
        <begin position="46"/>
        <end position="49"/>
    </location>
</feature>
<feature type="helix" evidence="28">
    <location>
        <begin position="50"/>
        <end position="52"/>
    </location>
</feature>
<feature type="helix" evidence="28">
    <location>
        <begin position="53"/>
        <end position="59"/>
    </location>
</feature>
<feature type="helix" evidence="28">
    <location>
        <begin position="66"/>
        <end position="76"/>
    </location>
</feature>
<feature type="turn" evidence="28">
    <location>
        <begin position="77"/>
        <end position="79"/>
    </location>
</feature>
<feature type="strand" evidence="28">
    <location>
        <begin position="82"/>
        <end position="85"/>
    </location>
</feature>
<feature type="helix" evidence="28">
    <location>
        <begin position="86"/>
        <end position="113"/>
    </location>
</feature>
<feature type="strand" evidence="27">
    <location>
        <begin position="115"/>
        <end position="117"/>
    </location>
</feature>
<feature type="strand" evidence="28">
    <location>
        <begin position="118"/>
        <end position="121"/>
    </location>
</feature>
<feature type="helix" evidence="28">
    <location>
        <begin position="123"/>
        <end position="132"/>
    </location>
</feature>
<feature type="helix" evidence="28">
    <location>
        <begin position="139"/>
        <end position="149"/>
    </location>
</feature>
<feature type="strand" evidence="27">
    <location>
        <begin position="150"/>
        <end position="152"/>
    </location>
</feature>
<feature type="strand" evidence="28">
    <location>
        <begin position="153"/>
        <end position="157"/>
    </location>
</feature>
<feature type="helix" evidence="28">
    <location>
        <begin position="159"/>
        <end position="166"/>
    </location>
</feature>
<reference key="1">
    <citation type="journal article" date="1993" name="Proc. Natl. Acad. Sci. U.S.A.">
        <title>Molecular cloning and centrosomal localization of human caltractin.</title>
        <authorList>
            <person name="Lee V.D."/>
            <person name="Huang B."/>
        </authorList>
    </citation>
    <scope>NUCLEOTIDE SEQUENCE [MRNA]</scope>
    <scope>FUNCTION</scope>
    <scope>SUBCELLULAR LOCATION</scope>
    <source>
        <tissue>Umbilical vein</tissue>
    </source>
</reference>
<reference key="2">
    <citation type="journal article" date="2000" name="Genome Res.">
        <title>Comparative genome sequence analysis of the Bpa/Str region in mouse and man.</title>
        <authorList>
            <person name="Mallon A.-M."/>
            <person name="Platzer M."/>
            <person name="Bate R."/>
            <person name="Gloeckner G."/>
            <person name="Botcherby M.R.M."/>
            <person name="Nordsiek G."/>
            <person name="Strivens M.A."/>
            <person name="Kioschis P."/>
            <person name="Dangel A."/>
            <person name="Cunningham D."/>
            <person name="Straw R.N.A."/>
            <person name="Weston P."/>
            <person name="Gilbert M."/>
            <person name="Fernando S."/>
            <person name="Goodall K."/>
            <person name="Hunter G."/>
            <person name="Greystrong J.S."/>
            <person name="Clarke D."/>
            <person name="Kimberley C."/>
            <person name="Goerdes M."/>
            <person name="Blechschmidt K."/>
            <person name="Rump A."/>
            <person name="Hinzmann B."/>
            <person name="Mundy C.R."/>
            <person name="Miller W."/>
            <person name="Poustka A."/>
            <person name="Herman G.E."/>
            <person name="Rhodes M."/>
            <person name="Denny P."/>
            <person name="Rosenthal A."/>
            <person name="Brown S.D.M."/>
        </authorList>
    </citation>
    <scope>NUCLEOTIDE SEQUENCE [LARGE SCALE GENOMIC DNA]</scope>
</reference>
<reference key="3">
    <citation type="journal article" date="2005" name="Nature">
        <title>The DNA sequence of the human X chromosome.</title>
        <authorList>
            <person name="Ross M.T."/>
            <person name="Grafham D.V."/>
            <person name="Coffey A.J."/>
            <person name="Scherer S."/>
            <person name="McLay K."/>
            <person name="Muzny D."/>
            <person name="Platzer M."/>
            <person name="Howell G.R."/>
            <person name="Burrows C."/>
            <person name="Bird C.P."/>
            <person name="Frankish A."/>
            <person name="Lovell F.L."/>
            <person name="Howe K.L."/>
            <person name="Ashurst J.L."/>
            <person name="Fulton R.S."/>
            <person name="Sudbrak R."/>
            <person name="Wen G."/>
            <person name="Jones M.C."/>
            <person name="Hurles M.E."/>
            <person name="Andrews T.D."/>
            <person name="Scott C.E."/>
            <person name="Searle S."/>
            <person name="Ramser J."/>
            <person name="Whittaker A."/>
            <person name="Deadman R."/>
            <person name="Carter N.P."/>
            <person name="Hunt S.E."/>
            <person name="Chen R."/>
            <person name="Cree A."/>
            <person name="Gunaratne P."/>
            <person name="Havlak P."/>
            <person name="Hodgson A."/>
            <person name="Metzker M.L."/>
            <person name="Richards S."/>
            <person name="Scott G."/>
            <person name="Steffen D."/>
            <person name="Sodergren E."/>
            <person name="Wheeler D.A."/>
            <person name="Worley K.C."/>
            <person name="Ainscough R."/>
            <person name="Ambrose K.D."/>
            <person name="Ansari-Lari M.A."/>
            <person name="Aradhya S."/>
            <person name="Ashwell R.I."/>
            <person name="Babbage A.K."/>
            <person name="Bagguley C.L."/>
            <person name="Ballabio A."/>
            <person name="Banerjee R."/>
            <person name="Barker G.E."/>
            <person name="Barlow K.F."/>
            <person name="Barrett I.P."/>
            <person name="Bates K.N."/>
            <person name="Beare D.M."/>
            <person name="Beasley H."/>
            <person name="Beasley O."/>
            <person name="Beck A."/>
            <person name="Bethel G."/>
            <person name="Blechschmidt K."/>
            <person name="Brady N."/>
            <person name="Bray-Allen S."/>
            <person name="Bridgeman A.M."/>
            <person name="Brown A.J."/>
            <person name="Brown M.J."/>
            <person name="Bonnin D."/>
            <person name="Bruford E.A."/>
            <person name="Buhay C."/>
            <person name="Burch P."/>
            <person name="Burford D."/>
            <person name="Burgess J."/>
            <person name="Burrill W."/>
            <person name="Burton J."/>
            <person name="Bye J.M."/>
            <person name="Carder C."/>
            <person name="Carrel L."/>
            <person name="Chako J."/>
            <person name="Chapman J.C."/>
            <person name="Chavez D."/>
            <person name="Chen E."/>
            <person name="Chen G."/>
            <person name="Chen Y."/>
            <person name="Chen Z."/>
            <person name="Chinault C."/>
            <person name="Ciccodicola A."/>
            <person name="Clark S.Y."/>
            <person name="Clarke G."/>
            <person name="Clee C.M."/>
            <person name="Clegg S."/>
            <person name="Clerc-Blankenburg K."/>
            <person name="Clifford K."/>
            <person name="Cobley V."/>
            <person name="Cole C.G."/>
            <person name="Conquer J.S."/>
            <person name="Corby N."/>
            <person name="Connor R.E."/>
            <person name="David R."/>
            <person name="Davies J."/>
            <person name="Davis C."/>
            <person name="Davis J."/>
            <person name="Delgado O."/>
            <person name="Deshazo D."/>
            <person name="Dhami P."/>
            <person name="Ding Y."/>
            <person name="Dinh H."/>
            <person name="Dodsworth S."/>
            <person name="Draper H."/>
            <person name="Dugan-Rocha S."/>
            <person name="Dunham A."/>
            <person name="Dunn M."/>
            <person name="Durbin K.J."/>
            <person name="Dutta I."/>
            <person name="Eades T."/>
            <person name="Ellwood M."/>
            <person name="Emery-Cohen A."/>
            <person name="Errington H."/>
            <person name="Evans K.L."/>
            <person name="Faulkner L."/>
            <person name="Francis F."/>
            <person name="Frankland J."/>
            <person name="Fraser A.E."/>
            <person name="Galgoczy P."/>
            <person name="Gilbert J."/>
            <person name="Gill R."/>
            <person name="Gloeckner G."/>
            <person name="Gregory S.G."/>
            <person name="Gribble S."/>
            <person name="Griffiths C."/>
            <person name="Grocock R."/>
            <person name="Gu Y."/>
            <person name="Gwilliam R."/>
            <person name="Hamilton C."/>
            <person name="Hart E.A."/>
            <person name="Hawes A."/>
            <person name="Heath P.D."/>
            <person name="Heitmann K."/>
            <person name="Hennig S."/>
            <person name="Hernandez J."/>
            <person name="Hinzmann B."/>
            <person name="Ho S."/>
            <person name="Hoffs M."/>
            <person name="Howden P.J."/>
            <person name="Huckle E.J."/>
            <person name="Hume J."/>
            <person name="Hunt P.J."/>
            <person name="Hunt A.R."/>
            <person name="Isherwood J."/>
            <person name="Jacob L."/>
            <person name="Johnson D."/>
            <person name="Jones S."/>
            <person name="de Jong P.J."/>
            <person name="Joseph S.S."/>
            <person name="Keenan S."/>
            <person name="Kelly S."/>
            <person name="Kershaw J.K."/>
            <person name="Khan Z."/>
            <person name="Kioschis P."/>
            <person name="Klages S."/>
            <person name="Knights A.J."/>
            <person name="Kosiura A."/>
            <person name="Kovar-Smith C."/>
            <person name="Laird G.K."/>
            <person name="Langford C."/>
            <person name="Lawlor S."/>
            <person name="Leversha M."/>
            <person name="Lewis L."/>
            <person name="Liu W."/>
            <person name="Lloyd C."/>
            <person name="Lloyd D.M."/>
            <person name="Loulseged H."/>
            <person name="Loveland J.E."/>
            <person name="Lovell J.D."/>
            <person name="Lozado R."/>
            <person name="Lu J."/>
            <person name="Lyne R."/>
            <person name="Ma J."/>
            <person name="Maheshwari M."/>
            <person name="Matthews L.H."/>
            <person name="McDowall J."/>
            <person name="McLaren S."/>
            <person name="McMurray A."/>
            <person name="Meidl P."/>
            <person name="Meitinger T."/>
            <person name="Milne S."/>
            <person name="Miner G."/>
            <person name="Mistry S.L."/>
            <person name="Morgan M."/>
            <person name="Morris S."/>
            <person name="Mueller I."/>
            <person name="Mullikin J.C."/>
            <person name="Nguyen N."/>
            <person name="Nordsiek G."/>
            <person name="Nyakatura G."/>
            <person name="O'dell C.N."/>
            <person name="Okwuonu G."/>
            <person name="Palmer S."/>
            <person name="Pandian R."/>
            <person name="Parker D."/>
            <person name="Parrish J."/>
            <person name="Pasternak S."/>
            <person name="Patel D."/>
            <person name="Pearce A.V."/>
            <person name="Pearson D.M."/>
            <person name="Pelan S.E."/>
            <person name="Perez L."/>
            <person name="Porter K.M."/>
            <person name="Ramsey Y."/>
            <person name="Reichwald K."/>
            <person name="Rhodes S."/>
            <person name="Ridler K.A."/>
            <person name="Schlessinger D."/>
            <person name="Schueler M.G."/>
            <person name="Sehra H.K."/>
            <person name="Shaw-Smith C."/>
            <person name="Shen H."/>
            <person name="Sheridan E.M."/>
            <person name="Shownkeen R."/>
            <person name="Skuce C.D."/>
            <person name="Smith M.L."/>
            <person name="Sotheran E.C."/>
            <person name="Steingruber H.E."/>
            <person name="Steward C.A."/>
            <person name="Storey R."/>
            <person name="Swann R.M."/>
            <person name="Swarbreck D."/>
            <person name="Tabor P.E."/>
            <person name="Taudien S."/>
            <person name="Taylor T."/>
            <person name="Teague B."/>
            <person name="Thomas K."/>
            <person name="Thorpe A."/>
            <person name="Timms K."/>
            <person name="Tracey A."/>
            <person name="Trevanion S."/>
            <person name="Tromans A.C."/>
            <person name="d'Urso M."/>
            <person name="Verduzco D."/>
            <person name="Villasana D."/>
            <person name="Waldron L."/>
            <person name="Wall M."/>
            <person name="Wang Q."/>
            <person name="Warren J."/>
            <person name="Warry G.L."/>
            <person name="Wei X."/>
            <person name="West A."/>
            <person name="Whitehead S.L."/>
            <person name="Whiteley M.N."/>
            <person name="Wilkinson J.E."/>
            <person name="Willey D.L."/>
            <person name="Williams G."/>
            <person name="Williams L."/>
            <person name="Williamson A."/>
            <person name="Williamson H."/>
            <person name="Wilming L."/>
            <person name="Woodmansey R.L."/>
            <person name="Wray P.W."/>
            <person name="Yen J."/>
            <person name="Zhang J."/>
            <person name="Zhou J."/>
            <person name="Zoghbi H."/>
            <person name="Zorilla S."/>
            <person name="Buck D."/>
            <person name="Reinhardt R."/>
            <person name="Poustka A."/>
            <person name="Rosenthal A."/>
            <person name="Lehrach H."/>
            <person name="Meindl A."/>
            <person name="Minx P.J."/>
            <person name="Hillier L.W."/>
            <person name="Willard H.F."/>
            <person name="Wilson R.K."/>
            <person name="Waterston R.H."/>
            <person name="Rice C.M."/>
            <person name="Vaudin M."/>
            <person name="Coulson A."/>
            <person name="Nelson D.L."/>
            <person name="Weinstock G."/>
            <person name="Sulston J.E."/>
            <person name="Durbin R.M."/>
            <person name="Hubbard T."/>
            <person name="Gibbs R.A."/>
            <person name="Beck S."/>
            <person name="Rogers J."/>
            <person name="Bentley D.R."/>
        </authorList>
    </citation>
    <scope>NUCLEOTIDE SEQUENCE [LARGE SCALE GENOMIC DNA]</scope>
</reference>
<reference key="4">
    <citation type="journal article" date="2004" name="Nat. Genet.">
        <title>Complete sequencing and characterization of 21,243 full-length human cDNAs.</title>
        <authorList>
            <person name="Ota T."/>
            <person name="Suzuki Y."/>
            <person name="Nishikawa T."/>
            <person name="Otsuki T."/>
            <person name="Sugiyama T."/>
            <person name="Irie R."/>
            <person name="Wakamatsu A."/>
            <person name="Hayashi K."/>
            <person name="Sato H."/>
            <person name="Nagai K."/>
            <person name="Kimura K."/>
            <person name="Makita H."/>
            <person name="Sekine M."/>
            <person name="Obayashi M."/>
            <person name="Nishi T."/>
            <person name="Shibahara T."/>
            <person name="Tanaka T."/>
            <person name="Ishii S."/>
            <person name="Yamamoto J."/>
            <person name="Saito K."/>
            <person name="Kawai Y."/>
            <person name="Isono Y."/>
            <person name="Nakamura Y."/>
            <person name="Nagahari K."/>
            <person name="Murakami K."/>
            <person name="Yasuda T."/>
            <person name="Iwayanagi T."/>
            <person name="Wagatsuma M."/>
            <person name="Shiratori A."/>
            <person name="Sudo H."/>
            <person name="Hosoiri T."/>
            <person name="Kaku Y."/>
            <person name="Kodaira H."/>
            <person name="Kondo H."/>
            <person name="Sugawara M."/>
            <person name="Takahashi M."/>
            <person name="Kanda K."/>
            <person name="Yokoi T."/>
            <person name="Furuya T."/>
            <person name="Kikkawa E."/>
            <person name="Omura Y."/>
            <person name="Abe K."/>
            <person name="Kamihara K."/>
            <person name="Katsuta N."/>
            <person name="Sato K."/>
            <person name="Tanikawa M."/>
            <person name="Yamazaki M."/>
            <person name="Ninomiya K."/>
            <person name="Ishibashi T."/>
            <person name="Yamashita H."/>
            <person name="Murakawa K."/>
            <person name="Fujimori K."/>
            <person name="Tanai H."/>
            <person name="Kimata M."/>
            <person name="Watanabe M."/>
            <person name="Hiraoka S."/>
            <person name="Chiba Y."/>
            <person name="Ishida S."/>
            <person name="Ono Y."/>
            <person name="Takiguchi S."/>
            <person name="Watanabe S."/>
            <person name="Yosida M."/>
            <person name="Hotuta T."/>
            <person name="Kusano J."/>
            <person name="Kanehori K."/>
            <person name="Takahashi-Fujii A."/>
            <person name="Hara H."/>
            <person name="Tanase T.-O."/>
            <person name="Nomura Y."/>
            <person name="Togiya S."/>
            <person name="Komai F."/>
            <person name="Hara R."/>
            <person name="Takeuchi K."/>
            <person name="Arita M."/>
            <person name="Imose N."/>
            <person name="Musashino K."/>
            <person name="Yuuki H."/>
            <person name="Oshima A."/>
            <person name="Sasaki N."/>
            <person name="Aotsuka S."/>
            <person name="Yoshikawa Y."/>
            <person name="Matsunawa H."/>
            <person name="Ichihara T."/>
            <person name="Shiohata N."/>
            <person name="Sano S."/>
            <person name="Moriya S."/>
            <person name="Momiyama H."/>
            <person name="Satoh N."/>
            <person name="Takami S."/>
            <person name="Terashima Y."/>
            <person name="Suzuki O."/>
            <person name="Nakagawa S."/>
            <person name="Senoh A."/>
            <person name="Mizoguchi H."/>
            <person name="Goto Y."/>
            <person name="Shimizu F."/>
            <person name="Wakebe H."/>
            <person name="Hishigaki H."/>
            <person name="Watanabe T."/>
            <person name="Sugiyama A."/>
            <person name="Takemoto M."/>
            <person name="Kawakami B."/>
            <person name="Yamazaki M."/>
            <person name="Watanabe K."/>
            <person name="Kumagai A."/>
            <person name="Itakura S."/>
            <person name="Fukuzumi Y."/>
            <person name="Fujimori Y."/>
            <person name="Komiyama M."/>
            <person name="Tashiro H."/>
            <person name="Tanigami A."/>
            <person name="Fujiwara T."/>
            <person name="Ono T."/>
            <person name="Yamada K."/>
            <person name="Fujii Y."/>
            <person name="Ozaki K."/>
            <person name="Hirao M."/>
            <person name="Ohmori Y."/>
            <person name="Kawabata A."/>
            <person name="Hikiji T."/>
            <person name="Kobatake N."/>
            <person name="Inagaki H."/>
            <person name="Ikema Y."/>
            <person name="Okamoto S."/>
            <person name="Okitani R."/>
            <person name="Kawakami T."/>
            <person name="Noguchi S."/>
            <person name="Itoh T."/>
            <person name="Shigeta K."/>
            <person name="Senba T."/>
            <person name="Matsumura K."/>
            <person name="Nakajima Y."/>
            <person name="Mizuno T."/>
            <person name="Morinaga M."/>
            <person name="Sasaki M."/>
            <person name="Togashi T."/>
            <person name="Oyama M."/>
            <person name="Hata H."/>
            <person name="Watanabe M."/>
            <person name="Komatsu T."/>
            <person name="Mizushima-Sugano J."/>
            <person name="Satoh T."/>
            <person name="Shirai Y."/>
            <person name="Takahashi Y."/>
            <person name="Nakagawa K."/>
            <person name="Okumura K."/>
            <person name="Nagase T."/>
            <person name="Nomura N."/>
            <person name="Kikuchi H."/>
            <person name="Masuho Y."/>
            <person name="Yamashita R."/>
            <person name="Nakai K."/>
            <person name="Yada T."/>
            <person name="Nakamura Y."/>
            <person name="Ohara O."/>
            <person name="Isogai T."/>
            <person name="Sugano S."/>
        </authorList>
    </citation>
    <scope>NUCLEOTIDE SEQUENCE [LARGE SCALE MRNA]</scope>
    <source>
        <tissue>Fetal brain</tissue>
    </source>
</reference>
<reference key="5">
    <citation type="submission" date="2003-05" db="EMBL/GenBank/DDBJ databases">
        <title>Cloning of human full-length CDSs in BD Creator(TM) system donor vector.</title>
        <authorList>
            <person name="Kalnine N."/>
            <person name="Chen X."/>
            <person name="Rolfs A."/>
            <person name="Halleck A."/>
            <person name="Hines L."/>
            <person name="Eisenstein S."/>
            <person name="Koundinya M."/>
            <person name="Raphael J."/>
            <person name="Moreira D."/>
            <person name="Kelley T."/>
            <person name="LaBaer J."/>
            <person name="Lin Y."/>
            <person name="Phelan M."/>
            <person name="Farmer A."/>
        </authorList>
    </citation>
    <scope>NUCLEOTIDE SEQUENCE [LARGE SCALE MRNA]</scope>
</reference>
<reference key="6">
    <citation type="submission" date="2005-02" db="EMBL/GenBank/DDBJ databases">
        <authorList>
            <consortium name="NIEHS SNPs program"/>
        </authorList>
    </citation>
    <scope>NUCLEOTIDE SEQUENCE [GENOMIC DNA]</scope>
</reference>
<reference key="7">
    <citation type="submission" date="2005-09" db="EMBL/GenBank/DDBJ databases">
        <authorList>
            <person name="Mural R.J."/>
            <person name="Istrail S."/>
            <person name="Sutton G.G."/>
            <person name="Florea L."/>
            <person name="Halpern A.L."/>
            <person name="Mobarry C.M."/>
            <person name="Lippert R."/>
            <person name="Walenz B."/>
            <person name="Shatkay H."/>
            <person name="Dew I."/>
            <person name="Miller J.R."/>
            <person name="Flanigan M.J."/>
            <person name="Edwards N.J."/>
            <person name="Bolanos R."/>
            <person name="Fasulo D."/>
            <person name="Halldorsson B.V."/>
            <person name="Hannenhalli S."/>
            <person name="Turner R."/>
            <person name="Yooseph S."/>
            <person name="Lu F."/>
            <person name="Nusskern D.R."/>
            <person name="Shue B.C."/>
            <person name="Zheng X.H."/>
            <person name="Zhong F."/>
            <person name="Delcher A.L."/>
            <person name="Huson D.H."/>
            <person name="Kravitz S.A."/>
            <person name="Mouchard L."/>
            <person name="Reinert K."/>
            <person name="Remington K.A."/>
            <person name="Clark A.G."/>
            <person name="Waterman M.S."/>
            <person name="Eichler E.E."/>
            <person name="Adams M.D."/>
            <person name="Hunkapiller M.W."/>
            <person name="Myers E.W."/>
            <person name="Venter J.C."/>
        </authorList>
    </citation>
    <scope>NUCLEOTIDE SEQUENCE [LARGE SCALE GENOMIC DNA]</scope>
</reference>
<reference key="8">
    <citation type="journal article" date="2004" name="Genome Res.">
        <title>The status, quality, and expansion of the NIH full-length cDNA project: the Mammalian Gene Collection (MGC).</title>
        <authorList>
            <consortium name="The MGC Project Team"/>
        </authorList>
    </citation>
    <scope>NUCLEOTIDE SEQUENCE [LARGE SCALE MRNA]</scope>
    <source>
        <tissue>Ovary</tissue>
        <tissue>Urinary bladder</tissue>
    </source>
</reference>
<reference key="9">
    <citation type="journal article" date="2001" name="J. Biol. Chem.">
        <title>Centrosome protein centrin 2/caltractin 1 is part of the xeroderma pigmentosum group C complex that initiates global genome nucleotide excision repair.</title>
        <authorList>
            <person name="Araki M."/>
            <person name="Masutani C."/>
            <person name="Takemura M."/>
            <person name="Uchida A."/>
            <person name="Sugasawa K."/>
            <person name="Kondoh J."/>
            <person name="Ohkuma Y."/>
            <person name="Hanaoka F."/>
        </authorList>
    </citation>
    <scope>FUNCTION IN DNA REPAIR</scope>
    <scope>IDENTIFICATION IN THE XPC COMPLEX</scope>
</reference>
<reference key="10">
    <citation type="journal article" date="2002" name="Curr. Biol.">
        <title>Centrin-2 is required for centriole duplication in mammalian cells.</title>
        <authorList>
            <person name="Salisbury J.L."/>
            <person name="Suino K.M."/>
            <person name="Busby R."/>
            <person name="Springett M."/>
        </authorList>
    </citation>
    <scope>FUNCTION</scope>
    <scope>SUBCELLULAR LOCATION</scope>
</reference>
<reference key="11">
    <citation type="journal article" date="2003" name="Nature">
        <title>Proteomic characterization of the human centrosome by protein correlation profiling.</title>
        <authorList>
            <person name="Andersen J.S."/>
            <person name="Wilkinson C.J."/>
            <person name="Mayor T."/>
            <person name="Mortensen P."/>
            <person name="Nigg E.A."/>
            <person name="Mann M."/>
        </authorList>
    </citation>
    <scope>IDENTIFICATION BY MASS SPECTROMETRY</scope>
    <scope>SUBCELLULAR LOCATION [LARGE SCALE ANALYSIS]</scope>
    <source>
        <tissue>Lymphoblast</tissue>
    </source>
</reference>
<reference key="12">
    <citation type="journal article" date="2004" name="J. Biol. Chem.">
        <title>Calcium-dependent self-assembly of human centrin 2.</title>
        <authorList>
            <person name="Tourbez M."/>
            <person name="Firanescu C."/>
            <person name="Yang A."/>
            <person name="Unipan L."/>
            <person name="Duchambon P."/>
            <person name="Blouquit Y."/>
            <person name="Craescu C.T."/>
        </authorList>
    </citation>
    <scope>HOMOOLIGOMERIZATION</scope>
</reference>
<reference key="13">
    <citation type="journal article" date="2005" name="Mol. Cell. Biol.">
        <title>Centrin 2 stimulates nucleotide excision repair by interacting with xeroderma pigmentosum group C protein.</title>
        <authorList>
            <person name="Nishi R."/>
            <person name="Okuda Y."/>
            <person name="Watanabe E."/>
            <person name="Mori T."/>
            <person name="Iwai S."/>
            <person name="Masutani C."/>
            <person name="Sugasawa K."/>
            <person name="Hanaoka F."/>
        </authorList>
    </citation>
    <scope>FUNCTION IN DNA REPAIR</scope>
    <scope>INTERACTION WITH XPC</scope>
</reference>
<reference key="14">
    <citation type="journal article" date="2006" name="Biochemistry">
        <title>Biochemical and structural domain analysis of xeroderma pigmentosum complementation group C protein.</title>
        <authorList>
            <person name="Bunick C.G."/>
            <person name="Miller M.R."/>
            <person name="Fuller B.E."/>
            <person name="Fanning E."/>
            <person name="Chazin W.J."/>
        </authorList>
    </citation>
    <scope>FUNCTION IN DNA REPAIR</scope>
</reference>
<reference key="15">
    <citation type="journal article" date="2006" name="Cell">
        <title>Global, in vivo, and site-specific phosphorylation dynamics in signaling networks.</title>
        <authorList>
            <person name="Olsen J.V."/>
            <person name="Blagoev B."/>
            <person name="Gnad F."/>
            <person name="Macek B."/>
            <person name="Kumar C."/>
            <person name="Mortensen P."/>
            <person name="Mann M."/>
        </authorList>
    </citation>
    <scope>PHOSPHORYLATION [LARGE SCALE ANALYSIS] AT THR-26</scope>
    <scope>IDENTIFICATION BY MASS SPECTROMETRY [LARGE SCALE ANALYSIS]</scope>
    <source>
        <tissue>Cervix carcinoma</tissue>
    </source>
</reference>
<reference key="16">
    <citation type="journal article" date="2006" name="FEBS J.">
        <title>Binding of human centrin 2 to the centrosomal protein hSfi1.</title>
        <authorList>
            <person name="Martinez-Sanz J."/>
            <person name="Yang A."/>
            <person name="Blouquit Y."/>
            <person name="Duchambon P."/>
            <person name="Assairi L."/>
            <person name="Craescu C.T."/>
        </authorList>
    </citation>
    <scope>INTERACTION WITH SFI1</scope>
</reference>
<reference key="17">
    <citation type="journal article" date="2006" name="Mol. Biol. Cell">
        <title>CP110 cooperates with two calcium-binding proteins to regulate cytokinesis and genome stability.</title>
        <authorList>
            <person name="Tsang W.Y."/>
            <person name="Spektor A."/>
            <person name="Luciano D.J."/>
            <person name="Indjeian V.B."/>
            <person name="Chen Z."/>
            <person name="Salisbury J.L."/>
            <person name="Sanchez I."/>
            <person name="Dynlacht B.D."/>
        </authorList>
    </citation>
    <scope>FUNCTION</scope>
    <scope>INTERACTION WITH CCP110</scope>
</reference>
<reference key="18">
    <citation type="journal article" date="2008" name="Proc. Natl. Acad. Sci. U.S.A.">
        <title>A quantitative atlas of mitotic phosphorylation.</title>
        <authorList>
            <person name="Dephoure N."/>
            <person name="Zhou C."/>
            <person name="Villen J."/>
            <person name="Beausoleil S.A."/>
            <person name="Bakalarski C.E."/>
            <person name="Elledge S.J."/>
            <person name="Gygi S.P."/>
        </authorList>
    </citation>
    <scope>PHOSPHORYLATION [LARGE SCALE ANALYSIS] AT SER-20</scope>
    <scope>IDENTIFICATION BY MASS SPECTROMETRY [LARGE SCALE ANALYSIS]</scope>
    <source>
        <tissue>Cervix carcinoma</tissue>
    </source>
</reference>
<reference key="19">
    <citation type="journal article" date="2010" name="Sci. Signal.">
        <title>Quantitative phosphoproteomics reveals widespread full phosphorylation site occupancy during mitosis.</title>
        <authorList>
            <person name="Olsen J.V."/>
            <person name="Vermeulen M."/>
            <person name="Santamaria A."/>
            <person name="Kumar C."/>
            <person name="Miller M.L."/>
            <person name="Jensen L.J."/>
            <person name="Gnad F."/>
            <person name="Cox J."/>
            <person name="Jensen T.S."/>
            <person name="Nigg E.A."/>
            <person name="Brunak S."/>
            <person name="Mann M."/>
        </authorList>
    </citation>
    <scope>PHOSPHORYLATION [LARGE SCALE ANALYSIS] AT SER-20 AND THR-26</scope>
    <scope>IDENTIFICATION BY MASS SPECTROMETRY [LARGE SCALE ANALYSIS]</scope>
    <source>
        <tissue>Cervix carcinoma</tissue>
    </source>
</reference>
<reference key="20">
    <citation type="journal article" date="2011" name="BMC Syst. Biol.">
        <title>Initial characterization of the human central proteome.</title>
        <authorList>
            <person name="Burkard T.R."/>
            <person name="Planyavsky M."/>
            <person name="Kaupe I."/>
            <person name="Breitwieser F.P."/>
            <person name="Buerckstuemmer T."/>
            <person name="Bennett K.L."/>
            <person name="Superti-Furga G."/>
            <person name="Colinge J."/>
        </authorList>
    </citation>
    <scope>IDENTIFICATION BY MASS SPECTROMETRY [LARGE SCALE ANALYSIS]</scope>
</reference>
<reference key="21">
    <citation type="journal article" date="2011" name="Sci. Signal.">
        <title>System-wide temporal characterization of the proteome and phosphoproteome of human embryonic stem cell differentiation.</title>
        <authorList>
            <person name="Rigbolt K.T."/>
            <person name="Prokhorova T.A."/>
            <person name="Akimov V."/>
            <person name="Henningsen J."/>
            <person name="Johansen P.T."/>
            <person name="Kratchmarova I."/>
            <person name="Kassem M."/>
            <person name="Mann M."/>
            <person name="Olsen J.V."/>
            <person name="Blagoev B."/>
        </authorList>
    </citation>
    <scope>PHOSPHORYLATION [LARGE SCALE ANALYSIS] AT SER-20 AND THR-26</scope>
    <scope>IDENTIFICATION BY MASS SPECTROMETRY [LARGE SCALE ANALYSIS]</scope>
</reference>
<reference key="22">
    <citation type="journal article" date="2012" name="Nucleic Acids Res.">
        <title>Functional and structural characterization of the mammalian TREX-2 complex that links transcription with nuclear messenger RNA export.</title>
        <authorList>
            <person name="Jani D."/>
            <person name="Lutz S."/>
            <person name="Hurt E."/>
            <person name="Laskey R.A."/>
            <person name="Stewart M."/>
            <person name="Wickramasinghe V.O."/>
        </authorList>
    </citation>
    <scope>INTERACTION WITH TREX-2 COMPLEX</scope>
    <scope>FUNCTION</scope>
</reference>
<reference key="23">
    <citation type="journal article" date="2012" name="Proc. Natl. Acad. Sci. U.S.A.">
        <title>N-terminal acetylome analyses and functional insights of the N-terminal acetyltransferase NatB.</title>
        <authorList>
            <person name="Van Damme P."/>
            <person name="Lasa M."/>
            <person name="Polevoda B."/>
            <person name="Gazquez C."/>
            <person name="Elosegui-Artola A."/>
            <person name="Kim D.S."/>
            <person name="De Juan-Pardo E."/>
            <person name="Demeyer K."/>
            <person name="Hole K."/>
            <person name="Larrea E."/>
            <person name="Timmerman E."/>
            <person name="Prieto J."/>
            <person name="Arnesen T."/>
            <person name="Sherman F."/>
            <person name="Gevaert K."/>
            <person name="Aldabe R."/>
        </authorList>
    </citation>
    <scope>ACETYLATION [LARGE SCALE ANALYSIS] AT ALA-2</scope>
    <scope>CLEAVAGE OF INITIATOR METHIONINE [LARGE SCALE ANALYSIS]</scope>
    <scope>IDENTIFICATION BY MASS SPECTROMETRY [LARGE SCALE ANALYSIS]</scope>
</reference>
<reference key="24">
    <citation type="journal article" date="2013" name="J. Cell Sci.">
        <title>The human TREX-2 complex is stably associated with the nuclear pore basket.</title>
        <authorList>
            <person name="Umlauf D."/>
            <person name="Bonnet J."/>
            <person name="Waharte F."/>
            <person name="Fournier M."/>
            <person name="Stierle M."/>
            <person name="Fischer B."/>
            <person name="Brino L."/>
            <person name="Devys D."/>
            <person name="Tora L."/>
        </authorList>
    </citation>
    <scope>FUNCTION</scope>
    <scope>IDENTIFICATION IN THE TREX-2 COMPLEX</scope>
    <scope>SUBCELLULAR LOCATION</scope>
</reference>
<reference key="25">
    <citation type="journal article" date="2013" name="J. Proteome Res.">
        <title>Toward a comprehensive characterization of a human cancer cell phosphoproteome.</title>
        <authorList>
            <person name="Zhou H."/>
            <person name="Di Palma S."/>
            <person name="Preisinger C."/>
            <person name="Peng M."/>
            <person name="Polat A.N."/>
            <person name="Heck A.J."/>
            <person name="Mohammed S."/>
        </authorList>
    </citation>
    <scope>PHOSPHORYLATION [LARGE SCALE ANALYSIS] AT SER-20</scope>
    <scope>IDENTIFICATION BY MASS SPECTROMETRY [LARGE SCALE ANALYSIS]</scope>
    <source>
        <tissue>Cervix carcinoma</tissue>
        <tissue>Erythroleukemia</tissue>
    </source>
</reference>
<reference key="26">
    <citation type="journal article" date="2014" name="J. Proteomics">
        <title>An enzyme assisted RP-RPLC approach for in-depth analysis of human liver phosphoproteome.</title>
        <authorList>
            <person name="Bian Y."/>
            <person name="Song C."/>
            <person name="Cheng K."/>
            <person name="Dong M."/>
            <person name="Wang F."/>
            <person name="Huang J."/>
            <person name="Sun D."/>
            <person name="Wang L."/>
            <person name="Ye M."/>
            <person name="Zou H."/>
        </authorList>
    </citation>
    <scope>IDENTIFICATION BY MASS SPECTROMETRY [LARGE SCALE ANALYSIS]</scope>
    <source>
        <tissue>Liver</tissue>
    </source>
</reference>
<reference key="27">
    <citation type="journal article" date="2017" name="Nat. Struct. Mol. Biol.">
        <title>Site-specific mapping of the human SUMO proteome reveals co-modification with phosphorylation.</title>
        <authorList>
            <person name="Hendriks I.A."/>
            <person name="Lyon D."/>
            <person name="Young C."/>
            <person name="Jensen L.J."/>
            <person name="Vertegaal A.C."/>
            <person name="Nielsen M.L."/>
        </authorList>
    </citation>
    <scope>SUMOYLATION [LARGE SCALE ANALYSIS] AT LYS-22</scope>
    <scope>IDENTIFICATION BY MASS SPECTROMETRY [LARGE SCALE ANALYSIS]</scope>
</reference>
<reference key="28">
    <citation type="journal article" date="2020" name="Sci. Adv.">
        <title>A helical inner scaffold provides a structural basis for centriole cohesion.</title>
        <authorList>
            <person name="Le Guennec M."/>
            <person name="Klena N."/>
            <person name="Gambarotto D."/>
            <person name="Laporte M.H."/>
            <person name="Tassin A.M."/>
            <person name="van den Hoek H."/>
            <person name="Erdmann P.S."/>
            <person name="Schaffer M."/>
            <person name="Kovacik L."/>
            <person name="Borgers S."/>
            <person name="Goldie K.N."/>
            <person name="Stahlberg H."/>
            <person name="Bornens M."/>
            <person name="Azimzadeh J."/>
            <person name="Engel B.D."/>
            <person name="Hamel V."/>
            <person name="Guichard P."/>
        </authorList>
    </citation>
    <scope>SUBCELLULAR LOCATION</scope>
    <scope>COMPLEX FORMATION WITH POC5; POC1B AND FAM161A</scope>
</reference>
<reference key="29">
    <citation type="journal article" date="2020" name="Elife">
        <title>WDR90 is a centriolar microtubule wall protein important for centriole architecture integrity.</title>
        <authorList>
            <person name="Steib E."/>
            <person name="Laporte M.H."/>
            <person name="Gambarotto D."/>
            <person name="Olieric N."/>
            <person name="Zheng C."/>
            <person name="Borgers S."/>
            <person name="Olieric V."/>
            <person name="Le Guennec M."/>
            <person name="Koll F."/>
            <person name="Tassin A.M."/>
            <person name="Steinmetz M.O."/>
            <person name="Guichard P."/>
            <person name="Hamel V."/>
        </authorList>
    </citation>
    <scope>SUBCELLULAR LOCATION</scope>
</reference>
<reference key="30">
    <citation type="journal article" date="2023" name="Cell Death Dis.">
        <title>USP49 deubiquitinase regulates the mitotic spindle checkpoint and prevents aneuploidy.</title>
        <authorList>
            <person name="Campos-Iglesias D."/>
            <person name="Fraile J.M."/>
            <person name="Bretones G."/>
            <person name="Montero A.A."/>
            <person name="Bonzon-Kulichenko E."/>
            <person name="Vazquez J."/>
            <person name="Lopez-Otin C."/>
            <person name="Freije J.M.P."/>
        </authorList>
    </citation>
    <scope>INTERACTION WITH USP49</scope>
</reference>
<reference key="31">
    <citation type="journal article" date="2023" name="J. Cell Biol.">
        <title>CCDC15 localizes to the centriole inner scaffold and controls centriole length and integrity.</title>
        <authorList>
            <person name="Arslanhan M.D."/>
            <person name="Cengiz-Emek S."/>
            <person name="Odabasi E."/>
            <person name="Steib E."/>
            <person name="Hamel V."/>
            <person name="Guichard P."/>
            <person name="Firat-Karalar E.N."/>
        </authorList>
    </citation>
    <scope>INTERACTION WITH CCDC15</scope>
    <scope>SUBCELLULAR LOCATION</scope>
</reference>
<reference key="32">
    <citation type="journal article" date="2003" name="Biochemistry">
        <title>C-terminal half of human centrin 2 behaves like a regulatory EF-hand domain.</title>
        <authorList>
            <person name="Matei E."/>
            <person name="Miron S."/>
            <person name="Blouquit Y."/>
            <person name="Duchambon P."/>
            <person name="Durussel I."/>
            <person name="Cox J.A."/>
            <person name="Craescu C.T."/>
        </authorList>
    </citation>
    <scope>STRUCTURE BY NMR OF 84-172</scope>
    <scope>CALCIUM-BINDING</scope>
</reference>
<reference key="33">
    <citation type="journal article" date="2006" name="Biochemistry">
        <title>The N-terminal domain of human centrin 2 has a closed structure, binds calcium with a very low affinity, and plays a role in the protein self-assembly.</title>
        <authorList>
            <person name="Yang A."/>
            <person name="Miron S."/>
            <person name="Duchambon P."/>
            <person name="Assairi L."/>
            <person name="Blouquit Y."/>
            <person name="Craescu C.T."/>
        </authorList>
    </citation>
    <scope>STRUCTURE BY NMR OF 1-98</scope>
    <scope>CALCIUM-BINDING</scope>
</reference>
<reference key="34">
    <citation type="journal article" date="2006" name="Biochemistry">
        <title>Flexibility and plasticity of human centrin 2 binding to the xeroderma pigmentosum group C protein (XPC) from nuclear excision repair.</title>
        <authorList>
            <person name="Yang A."/>
            <person name="Miron S."/>
            <person name="Mouawad L."/>
            <person name="Duchambon P."/>
            <person name="Blouquit Y."/>
            <person name="Craescu C.T."/>
        </authorList>
    </citation>
    <scope>STRUCTURE BY NMR OF 94-172 IN COMPLEX WITH XPC</scope>
    <scope>CALCIUM-BINDING</scope>
</reference>
<reference key="35">
    <citation type="journal article" date="2006" name="J. Biol. Chem.">
        <title>The structure of the human centrin 2-xeroderma pigmentosum group C protein complex.</title>
        <authorList>
            <person name="Thompson J.R."/>
            <person name="Ryan Z.C."/>
            <person name="Salisbury J.L."/>
            <person name="Kumar R."/>
        </authorList>
    </citation>
    <scope>X-RAY CRYSTALLOGRAPHY (2.35 ANGSTROMS) OF 1-172 IN COMPLEX WITH CALCIUM IONS AND XPC</scope>
</reference>
<proteinExistence type="evidence at protein level"/>
<accession>P41208</accession>
<accession>B2R4T4</accession>
<accession>Q53XW1</accession>